<keyword id="KW-0025">Alternative splicing</keyword>
<keyword id="KW-0175">Coiled coil</keyword>
<keyword id="KW-0256">Endoplasmic reticulum</keyword>
<keyword id="KW-0472">Membrane</keyword>
<keyword id="KW-0479">Metal-binding</keyword>
<keyword id="KW-1267">Proteomics identification</keyword>
<keyword id="KW-1185">Reference proteome</keyword>
<keyword id="KW-0808">Transferase</keyword>
<keyword id="KW-0812">Transmembrane</keyword>
<keyword id="KW-1133">Transmembrane helix</keyword>
<keyword id="KW-0833">Ubl conjugation pathway</keyword>
<keyword id="KW-0862">Zinc</keyword>
<keyword id="KW-0863">Zinc-finger</keyword>
<accession>Q8IWR1</accession>
<accession>A8K5G9</accession>
<accession>D3DNL9</accession>
<proteinExistence type="evidence at protein level"/>
<dbReference type="EC" id="2.3.2.27" evidence="6"/>
<dbReference type="EMBL" id="AY159379">
    <property type="protein sequence ID" value="AAN86853.1"/>
    <property type="molecule type" value="mRNA"/>
</dbReference>
<dbReference type="EMBL" id="AK291284">
    <property type="protein sequence ID" value="BAF83973.1"/>
    <property type="molecule type" value="mRNA"/>
</dbReference>
<dbReference type="EMBL" id="CH471052">
    <property type="protein sequence ID" value="EAW78635.1"/>
    <property type="molecule type" value="Genomic_DNA"/>
</dbReference>
<dbReference type="EMBL" id="CH471052">
    <property type="protein sequence ID" value="EAW78636.1"/>
    <property type="molecule type" value="Genomic_DNA"/>
</dbReference>
<dbReference type="EMBL" id="CH471052">
    <property type="protein sequence ID" value="EAW78637.1"/>
    <property type="molecule type" value="Genomic_DNA"/>
</dbReference>
<dbReference type="EMBL" id="CH471052">
    <property type="protein sequence ID" value="EAW78638.1"/>
    <property type="molecule type" value="Genomic_DNA"/>
</dbReference>
<dbReference type="EMBL" id="BC109259">
    <property type="protein sequence ID" value="AAI09260.1"/>
    <property type="molecule type" value="mRNA"/>
</dbReference>
<dbReference type="EMBL" id="BC109260">
    <property type="protein sequence ID" value="AAI09261.1"/>
    <property type="molecule type" value="mRNA"/>
</dbReference>
<dbReference type="CCDS" id="CCDS3190.1">
    <molecule id="Q8IWR1-1"/>
</dbReference>
<dbReference type="RefSeq" id="NP_775107.1">
    <molecule id="Q8IWR1-1"/>
    <property type="nucleotide sequence ID" value="NM_173084.3"/>
</dbReference>
<dbReference type="SMR" id="Q8IWR1"/>
<dbReference type="BioGRID" id="130421">
    <property type="interactions" value="55"/>
</dbReference>
<dbReference type="FunCoup" id="Q8IWR1">
    <property type="interactions" value="773"/>
</dbReference>
<dbReference type="IntAct" id="Q8IWR1">
    <property type="interactions" value="27"/>
</dbReference>
<dbReference type="STRING" id="9606.ENSP00000311219"/>
<dbReference type="iPTMnet" id="Q8IWR1"/>
<dbReference type="PhosphoSitePlus" id="Q8IWR1"/>
<dbReference type="SwissPalm" id="Q8IWR1"/>
<dbReference type="BioMuta" id="TRIM59"/>
<dbReference type="DMDM" id="74714421"/>
<dbReference type="jPOST" id="Q8IWR1"/>
<dbReference type="MassIVE" id="Q8IWR1"/>
<dbReference type="PaxDb" id="9606-ENSP00000311219"/>
<dbReference type="PeptideAtlas" id="Q8IWR1"/>
<dbReference type="ProteomicsDB" id="70884"/>
<dbReference type="Pumba" id="Q8IWR1"/>
<dbReference type="Antibodypedia" id="18518">
    <property type="antibodies" value="172 antibodies from 27 providers"/>
</dbReference>
<dbReference type="DNASU" id="286827"/>
<dbReference type="Ensembl" id="ENST00000309784.9">
    <molecule id="Q8IWR1-1"/>
    <property type="protein sequence ID" value="ENSP00000311219.4"/>
    <property type="gene ID" value="ENSG00000213186.8"/>
</dbReference>
<dbReference type="GeneID" id="286827"/>
<dbReference type="KEGG" id="hsa:286827"/>
<dbReference type="MANE-Select" id="ENST00000309784.9">
    <property type="protein sequence ID" value="ENSP00000311219.4"/>
    <property type="RefSeq nucleotide sequence ID" value="NM_173084.3"/>
    <property type="RefSeq protein sequence ID" value="NP_775107.1"/>
</dbReference>
<dbReference type="UCSC" id="uc003fdm.4">
    <molecule id="Q8IWR1-1"/>
    <property type="organism name" value="human"/>
</dbReference>
<dbReference type="AGR" id="HGNC:30834"/>
<dbReference type="CTD" id="286827"/>
<dbReference type="DisGeNET" id="286827"/>
<dbReference type="GeneCards" id="TRIM59"/>
<dbReference type="HGNC" id="HGNC:30834">
    <property type="gene designation" value="TRIM59"/>
</dbReference>
<dbReference type="HPA" id="ENSG00000213186">
    <property type="expression patterns" value="Tissue enhanced (bone marrow, lymphoid tissue)"/>
</dbReference>
<dbReference type="MIM" id="616148">
    <property type="type" value="gene"/>
</dbReference>
<dbReference type="neXtProt" id="NX_Q8IWR1"/>
<dbReference type="OpenTargets" id="ENSG00000213186"/>
<dbReference type="PharmGKB" id="PA134899610"/>
<dbReference type="VEuPathDB" id="HostDB:ENSG00000213186"/>
<dbReference type="eggNOG" id="KOG2177">
    <property type="taxonomic scope" value="Eukaryota"/>
</dbReference>
<dbReference type="GeneTree" id="ENSGT00940000160146"/>
<dbReference type="InParanoid" id="Q8IWR1"/>
<dbReference type="OMA" id="QEYTPHI"/>
<dbReference type="OrthoDB" id="6105938at2759"/>
<dbReference type="PAN-GO" id="Q8IWR1">
    <property type="GO annotations" value="3 GO annotations based on evolutionary models"/>
</dbReference>
<dbReference type="PhylomeDB" id="Q8IWR1"/>
<dbReference type="TreeFam" id="TF331669"/>
<dbReference type="PathwayCommons" id="Q8IWR1"/>
<dbReference type="SignaLink" id="Q8IWR1"/>
<dbReference type="SIGNOR" id="Q8IWR1"/>
<dbReference type="UniPathway" id="UPA00143"/>
<dbReference type="BioGRID-ORCS" id="286827">
    <property type="hits" value="8 hits in 1201 CRISPR screens"/>
</dbReference>
<dbReference type="GenomeRNAi" id="286827"/>
<dbReference type="Pharos" id="Q8IWR1">
    <property type="development level" value="Tbio"/>
</dbReference>
<dbReference type="PRO" id="PR:Q8IWR1"/>
<dbReference type="Proteomes" id="UP000005640">
    <property type="component" value="Chromosome 3"/>
</dbReference>
<dbReference type="RNAct" id="Q8IWR1">
    <property type="molecule type" value="protein"/>
</dbReference>
<dbReference type="Bgee" id="ENSG00000213186">
    <property type="expression patterns" value="Expressed in oocyte and 156 other cell types or tissues"/>
</dbReference>
<dbReference type="ExpressionAtlas" id="Q8IWR1">
    <property type="expression patterns" value="baseline and differential"/>
</dbReference>
<dbReference type="GO" id="GO:0005783">
    <property type="term" value="C:endoplasmic reticulum"/>
    <property type="evidence" value="ECO:0000250"/>
    <property type="project" value="UniProtKB"/>
</dbReference>
<dbReference type="GO" id="GO:0005789">
    <property type="term" value="C:endoplasmic reticulum membrane"/>
    <property type="evidence" value="ECO:0007669"/>
    <property type="project" value="UniProtKB-SubCell"/>
</dbReference>
<dbReference type="GO" id="GO:0061630">
    <property type="term" value="F:ubiquitin protein ligase activity"/>
    <property type="evidence" value="ECO:0000318"/>
    <property type="project" value="GO_Central"/>
</dbReference>
<dbReference type="GO" id="GO:0008270">
    <property type="term" value="F:zinc ion binding"/>
    <property type="evidence" value="ECO:0007669"/>
    <property type="project" value="UniProtKB-KW"/>
</dbReference>
<dbReference type="GO" id="GO:0046597">
    <property type="term" value="P:host-mediated suppression of symbiont invasion"/>
    <property type="evidence" value="ECO:0007669"/>
    <property type="project" value="Ensembl"/>
</dbReference>
<dbReference type="GO" id="GO:0045087">
    <property type="term" value="P:innate immune response"/>
    <property type="evidence" value="ECO:0000318"/>
    <property type="project" value="GO_Central"/>
</dbReference>
<dbReference type="GO" id="GO:0043124">
    <property type="term" value="P:negative regulation of canonical NF-kappaB signal transduction"/>
    <property type="evidence" value="ECO:0000315"/>
    <property type="project" value="MGI"/>
</dbReference>
<dbReference type="GO" id="GO:0016567">
    <property type="term" value="P:protein ubiquitination"/>
    <property type="evidence" value="ECO:0007669"/>
    <property type="project" value="UniProtKB-UniPathway"/>
</dbReference>
<dbReference type="CDD" id="cd19790">
    <property type="entry name" value="Bbox2_TRIM59_C-XI"/>
    <property type="match status" value="1"/>
</dbReference>
<dbReference type="CDD" id="cd16763">
    <property type="entry name" value="RING-HC_TRIM59_C-V"/>
    <property type="match status" value="1"/>
</dbReference>
<dbReference type="FunFam" id="3.30.160.60:FF:000772">
    <property type="entry name" value="tripartite motif-containing protein 59"/>
    <property type="match status" value="1"/>
</dbReference>
<dbReference type="FunFam" id="3.30.40.10:FF:000297">
    <property type="entry name" value="tripartite motif-containing protein 59"/>
    <property type="match status" value="1"/>
</dbReference>
<dbReference type="Gene3D" id="3.30.160.60">
    <property type="entry name" value="Classic Zinc Finger"/>
    <property type="match status" value="1"/>
</dbReference>
<dbReference type="Gene3D" id="3.30.40.10">
    <property type="entry name" value="Zinc/RING finger domain, C3HC4 (zinc finger)"/>
    <property type="match status" value="1"/>
</dbReference>
<dbReference type="InterPro" id="IPR027370">
    <property type="entry name" value="Znf-RING_euk"/>
</dbReference>
<dbReference type="InterPro" id="IPR000315">
    <property type="entry name" value="Znf_B-box"/>
</dbReference>
<dbReference type="InterPro" id="IPR001841">
    <property type="entry name" value="Znf_RING"/>
</dbReference>
<dbReference type="InterPro" id="IPR013083">
    <property type="entry name" value="Znf_RING/FYVE/PHD"/>
</dbReference>
<dbReference type="InterPro" id="IPR017907">
    <property type="entry name" value="Znf_RING_CS"/>
</dbReference>
<dbReference type="PANTHER" id="PTHR24098">
    <property type="entry name" value="OUTER SEGMENT 5"/>
    <property type="match status" value="1"/>
</dbReference>
<dbReference type="PANTHER" id="PTHR24098:SF14">
    <property type="entry name" value="TRIPARTITE MOTIF-CONTAINING PROTEIN 59"/>
    <property type="match status" value="1"/>
</dbReference>
<dbReference type="Pfam" id="PF00643">
    <property type="entry name" value="zf-B_box"/>
    <property type="match status" value="1"/>
</dbReference>
<dbReference type="Pfam" id="PF13445">
    <property type="entry name" value="zf-RING_UBOX"/>
    <property type="match status" value="1"/>
</dbReference>
<dbReference type="SMART" id="SM00184">
    <property type="entry name" value="RING"/>
    <property type="match status" value="1"/>
</dbReference>
<dbReference type="SUPFAM" id="SSF57845">
    <property type="entry name" value="B-box zinc-binding domain"/>
    <property type="match status" value="1"/>
</dbReference>
<dbReference type="SUPFAM" id="SSF57850">
    <property type="entry name" value="RING/U-box"/>
    <property type="match status" value="1"/>
</dbReference>
<dbReference type="PROSITE" id="PS50119">
    <property type="entry name" value="ZF_BBOX"/>
    <property type="match status" value="1"/>
</dbReference>
<dbReference type="PROSITE" id="PS00518">
    <property type="entry name" value="ZF_RING_1"/>
    <property type="match status" value="1"/>
</dbReference>
<dbReference type="PROSITE" id="PS50089">
    <property type="entry name" value="ZF_RING_2"/>
    <property type="match status" value="1"/>
</dbReference>
<comment type="function">
    <text evidence="1 5 6">E3 ubiquitin ligase involved in different processes such as development and immune response (PubMed:22588174, PubMed:30231667). Serves as a negative regulator for innate immune signaling pathways by suppressing RLR-induced activation of IRF3/7 and NF-kappa-B via interaction with adapter ECSIT (PubMed:22588174). Regulates autophagy through modulating both the transcription and the ubiquitination of BECN1 (PubMed:30231667). On the one hand, regulates the transcription of BECN1 through negatively modulating the NF-kappa-B pathway. On the other hand, regulates TRAF6-mediated 'Lys-63'-linked ubiquitination of BECN1, thus affecting the formation of the BECN1-PIK3C3 complex. In addition, mediates 'Lys-48'-linked ubiquitination of TRAF6 and thereby promotes TRAF6 proteasomal degradation (PubMed:30231667). Also acts as a critical regulator for early embryo development from blastocyst stage to gastrula through modulating F-actin assembly and WASH1 'Lys-63'-linked ubiquitination (By similarity).</text>
</comment>
<comment type="catalytic activity">
    <reaction evidence="6">
        <text>S-ubiquitinyl-[E2 ubiquitin-conjugating enzyme]-L-cysteine + [acceptor protein]-L-lysine = [E2 ubiquitin-conjugating enzyme]-L-cysteine + N(6)-ubiquitinyl-[acceptor protein]-L-lysine.</text>
        <dbReference type="EC" id="2.3.2.27"/>
    </reaction>
</comment>
<comment type="pathway">
    <text>Protein modification; protein ubiquitination.</text>
</comment>
<comment type="subunit">
    <text evidence="5">Interacts with ECSIT (PubMed:22588174).</text>
</comment>
<comment type="interaction">
    <interactant intactId="EBI-10262539">
        <id>Q8IWR1</id>
    </interactant>
    <interactant intactId="EBI-16746154">
        <id>Q7Z3H0-1</id>
        <label>ANKRD33</label>
    </interactant>
    <organismsDiffer>false</organismsDiffer>
    <experiments>3</experiments>
</comment>
<comment type="interaction">
    <interactant intactId="EBI-10262539">
        <id>Q8IWR1</id>
    </interactant>
    <interactant intactId="EBI-2548012">
        <id>Q9H2G9</id>
        <label>BLZF1</label>
    </interactant>
    <organismsDiffer>false</organismsDiffer>
    <experiments>3</experiments>
</comment>
<comment type="interaction">
    <interactant intactId="EBI-10262539">
        <id>Q8IWR1</id>
    </interactant>
    <interactant intactId="EBI-9316372">
        <id>O14493</id>
        <label>CLDN4</label>
    </interactant>
    <organismsDiffer>false</organismsDiffer>
    <experiments>3</experiments>
</comment>
<comment type="interaction">
    <interactant intactId="EBI-10262539">
        <id>Q8IWR1</id>
    </interactant>
    <interactant intactId="EBI-491065">
        <id>Q14232</id>
        <label>EIF2B1</label>
    </interactant>
    <organismsDiffer>false</organismsDiffer>
    <experiments>3</experiments>
</comment>
<comment type="interaction">
    <interactant intactId="EBI-10262539">
        <id>Q8IWR1</id>
    </interactant>
    <interactant intactId="EBI-10241252">
        <id>Q3SY46</id>
        <label>KRTAP13-3</label>
    </interactant>
    <organismsDiffer>false</organismsDiffer>
    <experiments>3</experiments>
</comment>
<comment type="interaction">
    <interactant intactId="EBI-10262539">
        <id>Q8IWR1</id>
    </interactant>
    <interactant intactId="EBI-19944212">
        <id>A8MW99</id>
        <label>MEI4</label>
    </interactant>
    <organismsDiffer>false</organismsDiffer>
    <experiments>3</experiments>
</comment>
<comment type="interaction">
    <interactant intactId="EBI-10262539">
        <id>Q8IWR1</id>
    </interactant>
    <interactant intactId="EBI-358272">
        <id>P52815</id>
        <label>MRPL12</label>
    </interactant>
    <organismsDiffer>false</organismsDiffer>
    <experiments>3</experiments>
</comment>
<comment type="interaction">
    <interactant intactId="EBI-10262539">
        <id>Q8IWR1</id>
    </interactant>
    <interactant intactId="EBI-10172876">
        <id>Q7Z6G3-2</id>
        <label>NECAB2</label>
    </interactant>
    <organismsDiffer>false</organismsDiffer>
    <experiments>3</experiments>
</comment>
<comment type="interaction">
    <interactant intactId="EBI-10262539">
        <id>Q8IWR1</id>
    </interactant>
    <interactant intactId="EBI-10262547">
        <id>Q8IXM6</id>
        <label>NRM</label>
    </interactant>
    <organismsDiffer>false</organismsDiffer>
    <experiments>7</experiments>
</comment>
<comment type="interaction">
    <interactant intactId="EBI-10262539">
        <id>Q8IWR1</id>
    </interactant>
    <interactant intactId="EBI-3919291">
        <id>Q9Y342</id>
        <label>PLLP</label>
    </interactant>
    <organismsDiffer>false</organismsDiffer>
    <experiments>3</experiments>
</comment>
<comment type="interaction">
    <interactant intactId="EBI-10262539">
        <id>Q8IWR1</id>
    </interactant>
    <interactant intactId="EBI-2845202">
        <id>Q86WH2</id>
        <label>RASSF3</label>
    </interactant>
    <organismsDiffer>false</organismsDiffer>
    <experiments>3</experiments>
</comment>
<comment type="interaction">
    <interactant intactId="EBI-10262539">
        <id>Q8IWR1</id>
    </interactant>
    <interactant intactId="EBI-8652744">
        <id>Q96IW7</id>
        <label>SEC22A</label>
    </interactant>
    <organismsDiffer>false</organismsDiffer>
    <experiments>5</experiments>
</comment>
<comment type="interaction">
    <interactant intactId="EBI-10262539">
        <id>Q8IWR1</id>
    </interactant>
    <interactant intactId="EBI-10244848">
        <id>Q5SQN1</id>
        <label>SNAP47</label>
    </interactant>
    <organismsDiffer>false</organismsDiffer>
    <experiments>3</experiments>
</comment>
<comment type="interaction">
    <interactant intactId="EBI-10262539">
        <id>Q8IWR1</id>
    </interactant>
    <interactant intactId="EBI-2340110">
        <id>Q8N2K1</id>
        <label>UBE2J2</label>
    </interactant>
    <organismsDiffer>false</organismsDiffer>
    <experiments>3</experiments>
</comment>
<comment type="interaction">
    <interactant intactId="EBI-10262539">
        <id>Q8IWR1</id>
    </interactant>
    <interactant intactId="EBI-10285774">
        <id>Q96FI0</id>
        <label>UBE2W</label>
    </interactant>
    <organismsDiffer>false</organismsDiffer>
    <experiments>3</experiments>
</comment>
<comment type="interaction">
    <interactant intactId="EBI-10262539">
        <id>Q8IWR1</id>
    </interactant>
    <interactant intactId="EBI-723716">
        <id>Q9UEU0</id>
        <label>VTI1B</label>
    </interactant>
    <organismsDiffer>false</organismsDiffer>
    <experiments>9</experiments>
</comment>
<comment type="interaction">
    <interactant intactId="EBI-10262539">
        <id>Q8IWR1</id>
    </interactant>
    <interactant intactId="EBI-2849773">
        <id>Q8IVQ6</id>
        <label>ZDHHC21</label>
    </interactant>
    <organismsDiffer>false</organismsDiffer>
    <experiments>3</experiments>
</comment>
<comment type="interaction">
    <interactant intactId="EBI-10262539">
        <id>Q8IWR1</id>
    </interactant>
    <interactant intactId="EBI-10268111">
        <id>Q8N966</id>
        <label>ZDHHC22</label>
    </interactant>
    <organismsDiffer>false</organismsDiffer>
    <experiments>8</experiments>
</comment>
<comment type="subcellular location">
    <subcellularLocation>
        <location evidence="5">Endoplasmic reticulum membrane</location>
        <topology evidence="7">Single-pass membrane protein</topology>
    </subcellularLocation>
</comment>
<comment type="alternative products">
    <event type="alternative splicing"/>
    <isoform>
        <id>Q8IWR1-1</id>
        <name>1</name>
        <sequence type="displayed"/>
    </isoform>
    <isoform>
        <id>Q9P2H3-3</id>
        <name>IFT80-L</name>
        <sequence type="external"/>
    </isoform>
</comment>
<comment type="similarity">
    <text evidence="7">Belongs to the TRIM/RBCC family.</text>
</comment>
<sequence length="403" mass="47114">MHNFEEELTCPICYSIFEDPRVLPCSHTFCRNCLENILQASGNFYIWRPLRIPLKCPNCRSITEIAPTGIESLPVNFALRAIIEKYQQEDHPDIVTCPEHYRQPLNVYCLLDKKLVCGHCLTIGQHHGHPIDDLQSAYLKEKDTPQKLLEQLTDTHWTDLTHLIEKLKEQKSHSEKMIQGDKEAVLQYFKELNDTLEQKKKSFLTALCDVGNLINQEYTPQIERMKEIREQQLELMALTISLQEESPLKFLEKVDDVRQHVQILKQRPLPEVQPVEIYPRVSKILKEEWSRTEIGQIKNVLIPKMKISPKRMSCSWPGKDEKEVEFLKILNIVVVTLISVILMSILFFNQHIITFLSEITLIWFSEASLSVYQSLSNSLHKVKNILCHIFYLLKEFVWKIVSH</sequence>
<gene>
    <name type="primary">TRIM59</name>
    <name type="synonym">RNF104</name>
    <name type="synonym">TRIM57</name>
    <name type="synonym">TSBF1</name>
</gene>
<protein>
    <recommendedName>
        <fullName>Tripartite motif-containing protein 59</fullName>
        <ecNumber evidence="6">2.3.2.27</ecNumber>
    </recommendedName>
    <alternativeName>
        <fullName>RING finger protein 104</fullName>
    </alternativeName>
    <alternativeName>
        <fullName>Tumor suppressor TSBF-1</fullName>
    </alternativeName>
</protein>
<feature type="chain" id="PRO_0000249679" description="Tripartite motif-containing protein 59">
    <location>
        <begin position="1"/>
        <end position="403"/>
    </location>
</feature>
<feature type="transmembrane region" description="Helical" evidence="2">
    <location>
        <begin position="329"/>
        <end position="349"/>
    </location>
</feature>
<feature type="zinc finger region" description="RING-type" evidence="4">
    <location>
        <begin position="10"/>
        <end position="60"/>
    </location>
</feature>
<feature type="zinc finger region" description="B box-type" evidence="3">
    <location>
        <begin position="92"/>
        <end position="134"/>
    </location>
</feature>
<feature type="coiled-coil region" evidence="2">
    <location>
        <begin position="163"/>
        <end position="246"/>
    </location>
</feature>
<feature type="binding site" evidence="3">
    <location>
        <position position="97"/>
    </location>
    <ligand>
        <name>Zn(2+)</name>
        <dbReference type="ChEBI" id="CHEBI:29105"/>
    </ligand>
</feature>
<feature type="binding site" evidence="3">
    <location>
        <position position="100"/>
    </location>
    <ligand>
        <name>Zn(2+)</name>
        <dbReference type="ChEBI" id="CHEBI:29105"/>
    </ligand>
</feature>
<feature type="binding site" evidence="3">
    <location>
        <position position="120"/>
    </location>
    <ligand>
        <name>Zn(2+)</name>
        <dbReference type="ChEBI" id="CHEBI:29105"/>
    </ligand>
</feature>
<feature type="binding site" evidence="3">
    <location>
        <position position="126"/>
    </location>
    <ligand>
        <name>Zn(2+)</name>
        <dbReference type="ChEBI" id="CHEBI:29105"/>
    </ligand>
</feature>
<reference key="1">
    <citation type="submission" date="2002-10" db="EMBL/GenBank/DDBJ databases">
        <title>Identification and characterization of TSBF-1, a novel gene encoding a tumor suppressor with ring finger domain.</title>
        <authorList>
            <person name="Gong L."/>
            <person name="Wu K."/>
        </authorList>
    </citation>
    <scope>NUCLEOTIDE SEQUENCE [MRNA]</scope>
</reference>
<reference key="2">
    <citation type="journal article" date="2004" name="Nat. Genet.">
        <title>Complete sequencing and characterization of 21,243 full-length human cDNAs.</title>
        <authorList>
            <person name="Ota T."/>
            <person name="Suzuki Y."/>
            <person name="Nishikawa T."/>
            <person name="Otsuki T."/>
            <person name="Sugiyama T."/>
            <person name="Irie R."/>
            <person name="Wakamatsu A."/>
            <person name="Hayashi K."/>
            <person name="Sato H."/>
            <person name="Nagai K."/>
            <person name="Kimura K."/>
            <person name="Makita H."/>
            <person name="Sekine M."/>
            <person name="Obayashi M."/>
            <person name="Nishi T."/>
            <person name="Shibahara T."/>
            <person name="Tanaka T."/>
            <person name="Ishii S."/>
            <person name="Yamamoto J."/>
            <person name="Saito K."/>
            <person name="Kawai Y."/>
            <person name="Isono Y."/>
            <person name="Nakamura Y."/>
            <person name="Nagahari K."/>
            <person name="Murakami K."/>
            <person name="Yasuda T."/>
            <person name="Iwayanagi T."/>
            <person name="Wagatsuma M."/>
            <person name="Shiratori A."/>
            <person name="Sudo H."/>
            <person name="Hosoiri T."/>
            <person name="Kaku Y."/>
            <person name="Kodaira H."/>
            <person name="Kondo H."/>
            <person name="Sugawara M."/>
            <person name="Takahashi M."/>
            <person name="Kanda K."/>
            <person name="Yokoi T."/>
            <person name="Furuya T."/>
            <person name="Kikkawa E."/>
            <person name="Omura Y."/>
            <person name="Abe K."/>
            <person name="Kamihara K."/>
            <person name="Katsuta N."/>
            <person name="Sato K."/>
            <person name="Tanikawa M."/>
            <person name="Yamazaki M."/>
            <person name="Ninomiya K."/>
            <person name="Ishibashi T."/>
            <person name="Yamashita H."/>
            <person name="Murakawa K."/>
            <person name="Fujimori K."/>
            <person name="Tanai H."/>
            <person name="Kimata M."/>
            <person name="Watanabe M."/>
            <person name="Hiraoka S."/>
            <person name="Chiba Y."/>
            <person name="Ishida S."/>
            <person name="Ono Y."/>
            <person name="Takiguchi S."/>
            <person name="Watanabe S."/>
            <person name="Yosida M."/>
            <person name="Hotuta T."/>
            <person name="Kusano J."/>
            <person name="Kanehori K."/>
            <person name="Takahashi-Fujii A."/>
            <person name="Hara H."/>
            <person name="Tanase T.-O."/>
            <person name="Nomura Y."/>
            <person name="Togiya S."/>
            <person name="Komai F."/>
            <person name="Hara R."/>
            <person name="Takeuchi K."/>
            <person name="Arita M."/>
            <person name="Imose N."/>
            <person name="Musashino K."/>
            <person name="Yuuki H."/>
            <person name="Oshima A."/>
            <person name="Sasaki N."/>
            <person name="Aotsuka S."/>
            <person name="Yoshikawa Y."/>
            <person name="Matsunawa H."/>
            <person name="Ichihara T."/>
            <person name="Shiohata N."/>
            <person name="Sano S."/>
            <person name="Moriya S."/>
            <person name="Momiyama H."/>
            <person name="Satoh N."/>
            <person name="Takami S."/>
            <person name="Terashima Y."/>
            <person name="Suzuki O."/>
            <person name="Nakagawa S."/>
            <person name="Senoh A."/>
            <person name="Mizoguchi H."/>
            <person name="Goto Y."/>
            <person name="Shimizu F."/>
            <person name="Wakebe H."/>
            <person name="Hishigaki H."/>
            <person name="Watanabe T."/>
            <person name="Sugiyama A."/>
            <person name="Takemoto M."/>
            <person name="Kawakami B."/>
            <person name="Yamazaki M."/>
            <person name="Watanabe K."/>
            <person name="Kumagai A."/>
            <person name="Itakura S."/>
            <person name="Fukuzumi Y."/>
            <person name="Fujimori Y."/>
            <person name="Komiyama M."/>
            <person name="Tashiro H."/>
            <person name="Tanigami A."/>
            <person name="Fujiwara T."/>
            <person name="Ono T."/>
            <person name="Yamada K."/>
            <person name="Fujii Y."/>
            <person name="Ozaki K."/>
            <person name="Hirao M."/>
            <person name="Ohmori Y."/>
            <person name="Kawabata A."/>
            <person name="Hikiji T."/>
            <person name="Kobatake N."/>
            <person name="Inagaki H."/>
            <person name="Ikema Y."/>
            <person name="Okamoto S."/>
            <person name="Okitani R."/>
            <person name="Kawakami T."/>
            <person name="Noguchi S."/>
            <person name="Itoh T."/>
            <person name="Shigeta K."/>
            <person name="Senba T."/>
            <person name="Matsumura K."/>
            <person name="Nakajima Y."/>
            <person name="Mizuno T."/>
            <person name="Morinaga M."/>
            <person name="Sasaki M."/>
            <person name="Togashi T."/>
            <person name="Oyama M."/>
            <person name="Hata H."/>
            <person name="Watanabe M."/>
            <person name="Komatsu T."/>
            <person name="Mizushima-Sugano J."/>
            <person name="Satoh T."/>
            <person name="Shirai Y."/>
            <person name="Takahashi Y."/>
            <person name="Nakagawa K."/>
            <person name="Okumura K."/>
            <person name="Nagase T."/>
            <person name="Nomura N."/>
            <person name="Kikuchi H."/>
            <person name="Masuho Y."/>
            <person name="Yamashita R."/>
            <person name="Nakai K."/>
            <person name="Yada T."/>
            <person name="Nakamura Y."/>
            <person name="Ohara O."/>
            <person name="Isogai T."/>
            <person name="Sugano S."/>
        </authorList>
    </citation>
    <scope>NUCLEOTIDE SEQUENCE [LARGE SCALE MRNA]</scope>
</reference>
<reference key="3">
    <citation type="submission" date="2005-09" db="EMBL/GenBank/DDBJ databases">
        <authorList>
            <person name="Mural R.J."/>
            <person name="Istrail S."/>
            <person name="Sutton G.G."/>
            <person name="Florea L."/>
            <person name="Halpern A.L."/>
            <person name="Mobarry C.M."/>
            <person name="Lippert R."/>
            <person name="Walenz B."/>
            <person name="Shatkay H."/>
            <person name="Dew I."/>
            <person name="Miller J.R."/>
            <person name="Flanigan M.J."/>
            <person name="Edwards N.J."/>
            <person name="Bolanos R."/>
            <person name="Fasulo D."/>
            <person name="Halldorsson B.V."/>
            <person name="Hannenhalli S."/>
            <person name="Turner R."/>
            <person name="Yooseph S."/>
            <person name="Lu F."/>
            <person name="Nusskern D.R."/>
            <person name="Shue B.C."/>
            <person name="Zheng X.H."/>
            <person name="Zhong F."/>
            <person name="Delcher A.L."/>
            <person name="Huson D.H."/>
            <person name="Kravitz S.A."/>
            <person name="Mouchard L."/>
            <person name="Reinert K."/>
            <person name="Remington K.A."/>
            <person name="Clark A.G."/>
            <person name="Waterman M.S."/>
            <person name="Eichler E.E."/>
            <person name="Adams M.D."/>
            <person name="Hunkapiller M.W."/>
            <person name="Myers E.W."/>
            <person name="Venter J.C."/>
        </authorList>
    </citation>
    <scope>NUCLEOTIDE SEQUENCE [LARGE SCALE GENOMIC DNA]</scope>
</reference>
<reference key="4">
    <citation type="journal article" date="2004" name="Genome Res.">
        <title>The status, quality, and expansion of the NIH full-length cDNA project: the Mammalian Gene Collection (MGC).</title>
        <authorList>
            <consortium name="The MGC Project Team"/>
        </authorList>
    </citation>
    <scope>NUCLEOTIDE SEQUENCE [LARGE SCALE MRNA]</scope>
</reference>
<reference key="5">
    <citation type="journal article" date="2008" name="Biochem. Biophys. Res. Commun.">
        <title>Identification and characterization of a long isoform of human IFT80, IFT80-L.</title>
        <authorList>
            <person name="Huang W."/>
            <person name="Kane J.K."/>
            <person name="Li M.D."/>
        </authorList>
    </citation>
    <scope>CHARACTERIZATION OF ISOFORM IFT80-L</scope>
    <scope>TISSUE SPECIFICITY</scope>
</reference>
<reference key="6">
    <citation type="journal article" date="2012" name="Biochem. Biophys. Res. Commun.">
        <title>TRIM59 interacts with ECSIT and negatively regulates NF-kappaB and IRF-3/7-mediated signal pathways.</title>
        <authorList>
            <person name="Kondo T."/>
            <person name="Watanabe M."/>
            <person name="Hatakeyama S."/>
        </authorList>
    </citation>
    <scope>FUNCTION</scope>
    <scope>INTERACTION WITH ECSIT</scope>
    <scope>SUBCELLULAR LOCATION</scope>
</reference>
<reference key="7">
    <citation type="journal article" date="2018" name="Autophagy">
        <title>TRIM59 regulates autophagy through modulating both the transcription and the ubiquitination of BECN1.</title>
        <authorList>
            <person name="Han T."/>
            <person name="Guo M."/>
            <person name="Gan M."/>
            <person name="Yu B."/>
            <person name="Tian X."/>
            <person name="Wang J.B."/>
        </authorList>
    </citation>
    <scope>FUNCTION</scope>
    <scope>CATALYTIC ACTIVITY</scope>
</reference>
<name>TRI59_HUMAN</name>
<organism>
    <name type="scientific">Homo sapiens</name>
    <name type="common">Human</name>
    <dbReference type="NCBI Taxonomy" id="9606"/>
    <lineage>
        <taxon>Eukaryota</taxon>
        <taxon>Metazoa</taxon>
        <taxon>Chordata</taxon>
        <taxon>Craniata</taxon>
        <taxon>Vertebrata</taxon>
        <taxon>Euteleostomi</taxon>
        <taxon>Mammalia</taxon>
        <taxon>Eutheria</taxon>
        <taxon>Euarchontoglires</taxon>
        <taxon>Primates</taxon>
        <taxon>Haplorrhini</taxon>
        <taxon>Catarrhini</taxon>
        <taxon>Hominidae</taxon>
        <taxon>Homo</taxon>
    </lineage>
</organism>
<evidence type="ECO:0000250" key="1">
    <source>
        <dbReference type="UniProtKB" id="Q922Y2"/>
    </source>
</evidence>
<evidence type="ECO:0000255" key="2"/>
<evidence type="ECO:0000255" key="3">
    <source>
        <dbReference type="PROSITE-ProRule" id="PRU00024"/>
    </source>
</evidence>
<evidence type="ECO:0000255" key="4">
    <source>
        <dbReference type="PROSITE-ProRule" id="PRU00175"/>
    </source>
</evidence>
<evidence type="ECO:0000269" key="5">
    <source>
    </source>
</evidence>
<evidence type="ECO:0000269" key="6">
    <source>
    </source>
</evidence>
<evidence type="ECO:0000305" key="7"/>